<accession>Q0AGI1</accession>
<name>ISPF_NITEC</name>
<comment type="function">
    <text evidence="1">Involved in the biosynthesis of isopentenyl diphosphate (IPP) and dimethylallyl diphosphate (DMAPP), two major building blocks of isoprenoid compounds. Catalyzes the conversion of 4-diphosphocytidyl-2-C-methyl-D-erythritol 2-phosphate (CDP-ME2P) to 2-C-methyl-D-erythritol 2,4-cyclodiphosphate (ME-CPP) with a corresponding release of cytidine 5-monophosphate (CMP).</text>
</comment>
<comment type="catalytic activity">
    <reaction evidence="1">
        <text>4-CDP-2-C-methyl-D-erythritol 2-phosphate = 2-C-methyl-D-erythritol 2,4-cyclic diphosphate + CMP</text>
        <dbReference type="Rhea" id="RHEA:23864"/>
        <dbReference type="ChEBI" id="CHEBI:57919"/>
        <dbReference type="ChEBI" id="CHEBI:58483"/>
        <dbReference type="ChEBI" id="CHEBI:60377"/>
        <dbReference type="EC" id="4.6.1.12"/>
    </reaction>
</comment>
<comment type="cofactor">
    <cofactor evidence="1">
        <name>a divalent metal cation</name>
        <dbReference type="ChEBI" id="CHEBI:60240"/>
    </cofactor>
    <text evidence="1">Binds 1 divalent metal cation per subunit.</text>
</comment>
<comment type="pathway">
    <text evidence="1">Isoprenoid biosynthesis; isopentenyl diphosphate biosynthesis via DXP pathway; isopentenyl diphosphate from 1-deoxy-D-xylulose 5-phosphate: step 4/6.</text>
</comment>
<comment type="subunit">
    <text evidence="1">Homotrimer.</text>
</comment>
<comment type="similarity">
    <text evidence="1">Belongs to the IspF family.</text>
</comment>
<organism>
    <name type="scientific">Nitrosomonas eutropha (strain DSM 101675 / C91 / Nm57)</name>
    <dbReference type="NCBI Taxonomy" id="335283"/>
    <lineage>
        <taxon>Bacteria</taxon>
        <taxon>Pseudomonadati</taxon>
        <taxon>Pseudomonadota</taxon>
        <taxon>Betaproteobacteria</taxon>
        <taxon>Nitrosomonadales</taxon>
        <taxon>Nitrosomonadaceae</taxon>
        <taxon>Nitrosomonas</taxon>
    </lineage>
</organism>
<protein>
    <recommendedName>
        <fullName evidence="1">2-C-methyl-D-erythritol 2,4-cyclodiphosphate synthase</fullName>
        <shortName evidence="1">MECDP-synthase</shortName>
        <shortName evidence="1">MECPP-synthase</shortName>
        <shortName evidence="1">MECPS</shortName>
        <ecNumber evidence="1">4.6.1.12</ecNumber>
    </recommendedName>
</protein>
<dbReference type="EC" id="4.6.1.12" evidence="1"/>
<dbReference type="EMBL" id="CP000450">
    <property type="protein sequence ID" value="ABI59551.1"/>
    <property type="molecule type" value="Genomic_DNA"/>
</dbReference>
<dbReference type="RefSeq" id="WP_011634370.1">
    <property type="nucleotide sequence ID" value="NC_008344.1"/>
</dbReference>
<dbReference type="SMR" id="Q0AGI1"/>
<dbReference type="STRING" id="335283.Neut_1300"/>
<dbReference type="KEGG" id="net:Neut_1300"/>
<dbReference type="eggNOG" id="COG0245">
    <property type="taxonomic scope" value="Bacteria"/>
</dbReference>
<dbReference type="HOGENOM" id="CLU_084630_2_0_4"/>
<dbReference type="OrthoDB" id="9804336at2"/>
<dbReference type="UniPathway" id="UPA00056">
    <property type="reaction ID" value="UER00095"/>
</dbReference>
<dbReference type="Proteomes" id="UP000001966">
    <property type="component" value="Chromosome"/>
</dbReference>
<dbReference type="GO" id="GO:0008685">
    <property type="term" value="F:2-C-methyl-D-erythritol 2,4-cyclodiphosphate synthase activity"/>
    <property type="evidence" value="ECO:0007669"/>
    <property type="project" value="UniProtKB-UniRule"/>
</dbReference>
<dbReference type="GO" id="GO:0046872">
    <property type="term" value="F:metal ion binding"/>
    <property type="evidence" value="ECO:0007669"/>
    <property type="project" value="UniProtKB-KW"/>
</dbReference>
<dbReference type="GO" id="GO:0019288">
    <property type="term" value="P:isopentenyl diphosphate biosynthetic process, methylerythritol 4-phosphate pathway"/>
    <property type="evidence" value="ECO:0007669"/>
    <property type="project" value="UniProtKB-UniRule"/>
</dbReference>
<dbReference type="GO" id="GO:0016114">
    <property type="term" value="P:terpenoid biosynthetic process"/>
    <property type="evidence" value="ECO:0007669"/>
    <property type="project" value="InterPro"/>
</dbReference>
<dbReference type="CDD" id="cd00554">
    <property type="entry name" value="MECDP_synthase"/>
    <property type="match status" value="1"/>
</dbReference>
<dbReference type="FunFam" id="3.30.1330.50:FF:000001">
    <property type="entry name" value="2-C-methyl-D-erythritol 2,4-cyclodiphosphate synthase"/>
    <property type="match status" value="1"/>
</dbReference>
<dbReference type="Gene3D" id="3.30.1330.50">
    <property type="entry name" value="2-C-methyl-D-erythritol 2,4-cyclodiphosphate synthase"/>
    <property type="match status" value="1"/>
</dbReference>
<dbReference type="HAMAP" id="MF_00107">
    <property type="entry name" value="IspF"/>
    <property type="match status" value="1"/>
</dbReference>
<dbReference type="InterPro" id="IPR003526">
    <property type="entry name" value="MECDP_synthase"/>
</dbReference>
<dbReference type="InterPro" id="IPR020555">
    <property type="entry name" value="MECDP_synthase_CS"/>
</dbReference>
<dbReference type="InterPro" id="IPR036571">
    <property type="entry name" value="MECDP_synthase_sf"/>
</dbReference>
<dbReference type="NCBIfam" id="TIGR00151">
    <property type="entry name" value="ispF"/>
    <property type="match status" value="1"/>
</dbReference>
<dbReference type="PANTHER" id="PTHR43181">
    <property type="entry name" value="2-C-METHYL-D-ERYTHRITOL 2,4-CYCLODIPHOSPHATE SYNTHASE, CHLOROPLASTIC"/>
    <property type="match status" value="1"/>
</dbReference>
<dbReference type="PANTHER" id="PTHR43181:SF1">
    <property type="entry name" value="2-C-METHYL-D-ERYTHRITOL 2,4-CYCLODIPHOSPHATE SYNTHASE, CHLOROPLASTIC"/>
    <property type="match status" value="1"/>
</dbReference>
<dbReference type="Pfam" id="PF02542">
    <property type="entry name" value="YgbB"/>
    <property type="match status" value="1"/>
</dbReference>
<dbReference type="SUPFAM" id="SSF69765">
    <property type="entry name" value="IpsF-like"/>
    <property type="match status" value="1"/>
</dbReference>
<dbReference type="PROSITE" id="PS01350">
    <property type="entry name" value="ISPF"/>
    <property type="match status" value="1"/>
</dbReference>
<proteinExistence type="inferred from homology"/>
<evidence type="ECO:0000255" key="1">
    <source>
        <dbReference type="HAMAP-Rule" id="MF_00107"/>
    </source>
</evidence>
<sequence length="167" mass="17571">MKKIRIGQGFDIHQLAAGRELVIGGVTIPYEKGLLGHSDADVLLHALCDALLGAAALGDIGKHFSDTDARYKDIDSRKLVCKVHRLLAETGYRVVNIDATIIAQAPKMAPHISGMIANIAQDLAMPAGNINIKAKTAEKLGAVGRGEGIVAEVVCLIANSDEGEAQP</sequence>
<gene>
    <name evidence="1" type="primary">ispF</name>
    <name type="ordered locus">Neut_1300</name>
</gene>
<reference key="1">
    <citation type="journal article" date="2007" name="Environ. Microbiol.">
        <title>Whole-genome analysis of the ammonia-oxidizing bacterium, Nitrosomonas eutropha C91: implications for niche adaptation.</title>
        <authorList>
            <person name="Stein L.Y."/>
            <person name="Arp D.J."/>
            <person name="Berube P.M."/>
            <person name="Chain P.S."/>
            <person name="Hauser L."/>
            <person name="Jetten M.S."/>
            <person name="Klotz M.G."/>
            <person name="Larimer F.W."/>
            <person name="Norton J.M."/>
            <person name="Op den Camp H.J.M."/>
            <person name="Shin M."/>
            <person name="Wei X."/>
        </authorList>
    </citation>
    <scope>NUCLEOTIDE SEQUENCE [LARGE SCALE GENOMIC DNA]</scope>
    <source>
        <strain>DSM 101675 / C91 / Nm57</strain>
    </source>
</reference>
<keyword id="KW-0414">Isoprene biosynthesis</keyword>
<keyword id="KW-0456">Lyase</keyword>
<keyword id="KW-0479">Metal-binding</keyword>
<feature type="chain" id="PRO_1000022857" description="2-C-methyl-D-erythritol 2,4-cyclodiphosphate synthase">
    <location>
        <begin position="1"/>
        <end position="167"/>
    </location>
</feature>
<feature type="binding site" evidence="1">
    <location>
        <begin position="11"/>
        <end position="13"/>
    </location>
    <ligand>
        <name>4-CDP-2-C-methyl-D-erythritol 2-phosphate</name>
        <dbReference type="ChEBI" id="CHEBI:57919"/>
    </ligand>
</feature>
<feature type="binding site" evidence="1">
    <location>
        <position position="11"/>
    </location>
    <ligand>
        <name>a divalent metal cation</name>
        <dbReference type="ChEBI" id="CHEBI:60240"/>
    </ligand>
</feature>
<feature type="binding site" evidence="1">
    <location>
        <position position="13"/>
    </location>
    <ligand>
        <name>a divalent metal cation</name>
        <dbReference type="ChEBI" id="CHEBI:60240"/>
    </ligand>
</feature>
<feature type="binding site" evidence="1">
    <location>
        <begin position="37"/>
        <end position="38"/>
    </location>
    <ligand>
        <name>4-CDP-2-C-methyl-D-erythritol 2-phosphate</name>
        <dbReference type="ChEBI" id="CHEBI:57919"/>
    </ligand>
</feature>
<feature type="binding site" evidence="1">
    <location>
        <position position="45"/>
    </location>
    <ligand>
        <name>a divalent metal cation</name>
        <dbReference type="ChEBI" id="CHEBI:60240"/>
    </ligand>
</feature>
<feature type="binding site" evidence="1">
    <location>
        <begin position="59"/>
        <end position="61"/>
    </location>
    <ligand>
        <name>4-CDP-2-C-methyl-D-erythritol 2-phosphate</name>
        <dbReference type="ChEBI" id="CHEBI:57919"/>
    </ligand>
</feature>
<feature type="binding site" evidence="1">
    <location>
        <begin position="64"/>
        <end position="68"/>
    </location>
    <ligand>
        <name>4-CDP-2-C-methyl-D-erythritol 2-phosphate</name>
        <dbReference type="ChEBI" id="CHEBI:57919"/>
    </ligand>
</feature>
<feature type="binding site" evidence="1">
    <location>
        <begin position="103"/>
        <end position="109"/>
    </location>
    <ligand>
        <name>4-CDP-2-C-methyl-D-erythritol 2-phosphate</name>
        <dbReference type="ChEBI" id="CHEBI:57919"/>
    </ligand>
</feature>
<feature type="binding site" evidence="1">
    <location>
        <position position="145"/>
    </location>
    <ligand>
        <name>4-CDP-2-C-methyl-D-erythritol 2-phosphate</name>
        <dbReference type="ChEBI" id="CHEBI:57919"/>
    </ligand>
</feature>
<feature type="site" description="Transition state stabilizer" evidence="1">
    <location>
        <position position="37"/>
    </location>
</feature>
<feature type="site" description="Transition state stabilizer" evidence="1">
    <location>
        <position position="136"/>
    </location>
</feature>